<organism>
    <name type="scientific">Ureaplasma parvum serovar 3 (strain ATCC 27815 / 27 / NCTC 11736)</name>
    <dbReference type="NCBI Taxonomy" id="505682"/>
    <lineage>
        <taxon>Bacteria</taxon>
        <taxon>Bacillati</taxon>
        <taxon>Mycoplasmatota</taxon>
        <taxon>Mycoplasmoidales</taxon>
        <taxon>Mycoplasmoidaceae</taxon>
        <taxon>Ureaplasma</taxon>
    </lineage>
</organism>
<reference key="1">
    <citation type="submission" date="2008-02" db="EMBL/GenBank/DDBJ databases">
        <title>Genome sequence of Ureaplasma parvum serovar 3.</title>
        <authorList>
            <person name="Methe B.A."/>
            <person name="Glass J."/>
            <person name="Waites K."/>
            <person name="Shrivastava S."/>
        </authorList>
    </citation>
    <scope>NUCLEOTIDE SEQUENCE [LARGE SCALE GENOMIC DNA]</scope>
    <source>
        <strain>ATCC 27815 / 27 / NCTC 11736</strain>
    </source>
</reference>
<name>RL13_UREP2</name>
<dbReference type="EMBL" id="CP000942">
    <property type="protein sequence ID" value="ACA33289.1"/>
    <property type="molecule type" value="Genomic_DNA"/>
</dbReference>
<dbReference type="RefSeq" id="WP_006688786.1">
    <property type="nucleotide sequence ID" value="NC_010503.1"/>
</dbReference>
<dbReference type="SMR" id="B1AJL8"/>
<dbReference type="GeneID" id="29672159"/>
<dbReference type="KEGG" id="upa:UPA3_0616"/>
<dbReference type="HOGENOM" id="CLU_082184_2_2_14"/>
<dbReference type="Proteomes" id="UP000002162">
    <property type="component" value="Chromosome"/>
</dbReference>
<dbReference type="GO" id="GO:0022625">
    <property type="term" value="C:cytosolic large ribosomal subunit"/>
    <property type="evidence" value="ECO:0007669"/>
    <property type="project" value="TreeGrafter"/>
</dbReference>
<dbReference type="GO" id="GO:0003729">
    <property type="term" value="F:mRNA binding"/>
    <property type="evidence" value="ECO:0007669"/>
    <property type="project" value="TreeGrafter"/>
</dbReference>
<dbReference type="GO" id="GO:0003735">
    <property type="term" value="F:structural constituent of ribosome"/>
    <property type="evidence" value="ECO:0007669"/>
    <property type="project" value="InterPro"/>
</dbReference>
<dbReference type="GO" id="GO:0017148">
    <property type="term" value="P:negative regulation of translation"/>
    <property type="evidence" value="ECO:0007669"/>
    <property type="project" value="TreeGrafter"/>
</dbReference>
<dbReference type="GO" id="GO:0006412">
    <property type="term" value="P:translation"/>
    <property type="evidence" value="ECO:0007669"/>
    <property type="project" value="UniProtKB-UniRule"/>
</dbReference>
<dbReference type="CDD" id="cd00392">
    <property type="entry name" value="Ribosomal_L13"/>
    <property type="match status" value="1"/>
</dbReference>
<dbReference type="Gene3D" id="3.90.1180.10">
    <property type="entry name" value="Ribosomal protein L13"/>
    <property type="match status" value="1"/>
</dbReference>
<dbReference type="HAMAP" id="MF_01366">
    <property type="entry name" value="Ribosomal_uL13"/>
    <property type="match status" value="1"/>
</dbReference>
<dbReference type="InterPro" id="IPR005822">
    <property type="entry name" value="Ribosomal_uL13"/>
</dbReference>
<dbReference type="InterPro" id="IPR005823">
    <property type="entry name" value="Ribosomal_uL13_bac-type"/>
</dbReference>
<dbReference type="InterPro" id="IPR036899">
    <property type="entry name" value="Ribosomal_uL13_sf"/>
</dbReference>
<dbReference type="NCBIfam" id="TIGR01066">
    <property type="entry name" value="rplM_bact"/>
    <property type="match status" value="1"/>
</dbReference>
<dbReference type="PANTHER" id="PTHR11545:SF2">
    <property type="entry name" value="LARGE RIBOSOMAL SUBUNIT PROTEIN UL13M"/>
    <property type="match status" value="1"/>
</dbReference>
<dbReference type="PANTHER" id="PTHR11545">
    <property type="entry name" value="RIBOSOMAL PROTEIN L13"/>
    <property type="match status" value="1"/>
</dbReference>
<dbReference type="Pfam" id="PF00572">
    <property type="entry name" value="Ribosomal_L13"/>
    <property type="match status" value="1"/>
</dbReference>
<dbReference type="PIRSF" id="PIRSF002181">
    <property type="entry name" value="Ribosomal_L13"/>
    <property type="match status" value="1"/>
</dbReference>
<dbReference type="SUPFAM" id="SSF52161">
    <property type="entry name" value="Ribosomal protein L13"/>
    <property type="match status" value="1"/>
</dbReference>
<sequence>MQKSSMLKKEVAIARRQWYLVDATDLVLGRLSVKVADILRGKNKVDYTPNVDAGDYVVVINSDKVVLTGQKALRENWYNHSHYIGGLRTRSGEEMISKYSDELIRRSVKGMLPKNKLAKQILNKLFIYKNDKHPHEAQQPTILELKLK</sequence>
<proteinExistence type="inferred from homology"/>
<protein>
    <recommendedName>
        <fullName evidence="1">Large ribosomal subunit protein uL13</fullName>
    </recommendedName>
    <alternativeName>
        <fullName evidence="2">50S ribosomal protein L13</fullName>
    </alternativeName>
</protein>
<feature type="chain" id="PRO_1000087111" description="Large ribosomal subunit protein uL13">
    <location>
        <begin position="1"/>
        <end position="148"/>
    </location>
</feature>
<evidence type="ECO:0000255" key="1">
    <source>
        <dbReference type="HAMAP-Rule" id="MF_01366"/>
    </source>
</evidence>
<evidence type="ECO:0000305" key="2"/>
<keyword id="KW-0687">Ribonucleoprotein</keyword>
<keyword id="KW-0689">Ribosomal protein</keyword>
<comment type="function">
    <text evidence="1">This protein is one of the early assembly proteins of the 50S ribosomal subunit, although it is not seen to bind rRNA by itself. It is important during the early stages of 50S assembly.</text>
</comment>
<comment type="subunit">
    <text evidence="1">Part of the 50S ribosomal subunit.</text>
</comment>
<comment type="similarity">
    <text evidence="1">Belongs to the universal ribosomal protein uL13 family.</text>
</comment>
<accession>B1AJL8</accession>
<gene>
    <name evidence="1" type="primary">rplM</name>
    <name type="ordered locus">UPA3_0616</name>
</gene>